<organism>
    <name type="scientific">Shigella dysenteriae serotype 1 (strain Sd197)</name>
    <dbReference type="NCBI Taxonomy" id="300267"/>
    <lineage>
        <taxon>Bacteria</taxon>
        <taxon>Pseudomonadati</taxon>
        <taxon>Pseudomonadota</taxon>
        <taxon>Gammaproteobacteria</taxon>
        <taxon>Enterobacterales</taxon>
        <taxon>Enterobacteriaceae</taxon>
        <taxon>Shigella</taxon>
    </lineage>
</organism>
<comment type="function">
    <text evidence="1">Part of the ABC transporter complex UgpBAEC involved in sn-glycerol-3-phosphate (G3P) import. Binds G3P.</text>
</comment>
<comment type="subunit">
    <text evidence="1">The complex is composed of two ATP-binding proteins (UgpC), two transmembrane proteins (UgpA and UgpE) and a solute-binding protein (UgpB).</text>
</comment>
<comment type="subcellular location">
    <subcellularLocation>
        <location evidence="1">Periplasm</location>
    </subcellularLocation>
</comment>
<comment type="similarity">
    <text evidence="3">Belongs to the bacterial solute-binding protein 1 family.</text>
</comment>
<proteinExistence type="inferred from homology"/>
<dbReference type="EMBL" id="CP000034">
    <property type="protein sequence ID" value="ABB63572.1"/>
    <property type="molecule type" value="Genomic_DNA"/>
</dbReference>
<dbReference type="RefSeq" id="WP_000803212.1">
    <property type="nucleotide sequence ID" value="NC_007606.1"/>
</dbReference>
<dbReference type="RefSeq" id="YP_405063.1">
    <property type="nucleotide sequence ID" value="NC_007606.1"/>
</dbReference>
<dbReference type="SMR" id="Q32AT3"/>
<dbReference type="STRING" id="300267.SDY_3601"/>
<dbReference type="EnsemblBacteria" id="ABB63572">
    <property type="protein sequence ID" value="ABB63572"/>
    <property type="gene ID" value="SDY_3601"/>
</dbReference>
<dbReference type="KEGG" id="sdy:SDY_3601"/>
<dbReference type="PATRIC" id="fig|300267.13.peg.4276"/>
<dbReference type="HOGENOM" id="CLU_031285_3_0_6"/>
<dbReference type="Proteomes" id="UP000002716">
    <property type="component" value="Chromosome"/>
</dbReference>
<dbReference type="GO" id="GO:0030288">
    <property type="term" value="C:outer membrane-bounded periplasmic space"/>
    <property type="evidence" value="ECO:0007669"/>
    <property type="project" value="UniProtKB-ARBA"/>
</dbReference>
<dbReference type="GO" id="GO:0055085">
    <property type="term" value="P:transmembrane transport"/>
    <property type="evidence" value="ECO:0007669"/>
    <property type="project" value="InterPro"/>
</dbReference>
<dbReference type="CDD" id="cd14748">
    <property type="entry name" value="PBP2_UgpB"/>
    <property type="match status" value="1"/>
</dbReference>
<dbReference type="Gene3D" id="3.40.190.10">
    <property type="entry name" value="Periplasmic binding protein-like II"/>
    <property type="match status" value="2"/>
</dbReference>
<dbReference type="InterPro" id="IPR050490">
    <property type="entry name" value="Bact_solute-bd_prot1"/>
</dbReference>
<dbReference type="InterPro" id="IPR006059">
    <property type="entry name" value="SBP"/>
</dbReference>
<dbReference type="InterPro" id="IPR006061">
    <property type="entry name" value="SBP_1_CS"/>
</dbReference>
<dbReference type="NCBIfam" id="NF008211">
    <property type="entry name" value="PRK10974.1"/>
    <property type="match status" value="1"/>
</dbReference>
<dbReference type="PANTHER" id="PTHR43649">
    <property type="entry name" value="ARABINOSE-BINDING PROTEIN-RELATED"/>
    <property type="match status" value="1"/>
</dbReference>
<dbReference type="PANTHER" id="PTHR43649:SF31">
    <property type="entry name" value="SN-GLYCEROL-3-PHOSPHATE-BINDING PERIPLASMIC PROTEIN UGPB"/>
    <property type="match status" value="1"/>
</dbReference>
<dbReference type="Pfam" id="PF13416">
    <property type="entry name" value="SBP_bac_8"/>
    <property type="match status" value="1"/>
</dbReference>
<dbReference type="SUPFAM" id="SSF53850">
    <property type="entry name" value="Periplasmic binding protein-like II"/>
    <property type="match status" value="1"/>
</dbReference>
<dbReference type="PROSITE" id="PS01037">
    <property type="entry name" value="SBP_BACTERIAL_1"/>
    <property type="match status" value="1"/>
</dbReference>
<name>UGPB_SHIDS</name>
<feature type="signal peptide" evidence="2">
    <location>
        <begin position="1"/>
        <end position="23"/>
    </location>
</feature>
<feature type="chain" id="PRO_0000292817" description="sn-glycerol-3-phosphate-binding periplasmic protein UgpB">
    <location>
        <begin position="24"/>
        <end position="438"/>
    </location>
</feature>
<feature type="binding site" evidence="1">
    <location>
        <position position="65"/>
    </location>
    <ligand>
        <name>sn-glycerol 3-phosphate</name>
        <dbReference type="ChEBI" id="CHEBI:57597"/>
    </ligand>
</feature>
<feature type="binding site" evidence="1">
    <location>
        <position position="89"/>
    </location>
    <ligand>
        <name>sn-glycerol 3-phosphate</name>
        <dbReference type="ChEBI" id="CHEBI:57597"/>
    </ligand>
</feature>
<feature type="binding site" evidence="1">
    <location>
        <position position="144"/>
    </location>
    <ligand>
        <name>sn-glycerol 3-phosphate</name>
        <dbReference type="ChEBI" id="CHEBI:57597"/>
    </ligand>
</feature>
<feature type="binding site" evidence="1">
    <location>
        <position position="270"/>
    </location>
    <ligand>
        <name>sn-glycerol 3-phosphate</name>
        <dbReference type="ChEBI" id="CHEBI:57597"/>
    </ligand>
</feature>
<feature type="binding site" evidence="1">
    <location>
        <position position="307"/>
    </location>
    <ligand>
        <name>sn-glycerol 3-phosphate</name>
        <dbReference type="ChEBI" id="CHEBI:57597"/>
    </ligand>
</feature>
<feature type="binding site" evidence="1">
    <location>
        <position position="346"/>
    </location>
    <ligand>
        <name>sn-glycerol 3-phosphate</name>
        <dbReference type="ChEBI" id="CHEBI:57597"/>
    </ligand>
</feature>
<feature type="binding site" evidence="1">
    <location>
        <position position="397"/>
    </location>
    <ligand>
        <name>sn-glycerol 3-phosphate</name>
        <dbReference type="ChEBI" id="CHEBI:57597"/>
    </ligand>
</feature>
<evidence type="ECO:0000250" key="1">
    <source>
        <dbReference type="UniProtKB" id="P0AG80"/>
    </source>
</evidence>
<evidence type="ECO:0000255" key="2"/>
<evidence type="ECO:0000305" key="3"/>
<accession>Q32AT3</accession>
<protein>
    <recommendedName>
        <fullName evidence="1">sn-glycerol-3-phosphate-binding periplasmic protein UgpB</fullName>
    </recommendedName>
</protein>
<gene>
    <name type="primary">ugpB</name>
    <name type="ordered locus">SDY_3601</name>
</gene>
<reference key="1">
    <citation type="journal article" date="2005" name="Nucleic Acids Res.">
        <title>Genome dynamics and diversity of Shigella species, the etiologic agents of bacillary dysentery.</title>
        <authorList>
            <person name="Yang F."/>
            <person name="Yang J."/>
            <person name="Zhang X."/>
            <person name="Chen L."/>
            <person name="Jiang Y."/>
            <person name="Yan Y."/>
            <person name="Tang X."/>
            <person name="Wang J."/>
            <person name="Xiong Z."/>
            <person name="Dong J."/>
            <person name="Xue Y."/>
            <person name="Zhu Y."/>
            <person name="Xu X."/>
            <person name="Sun L."/>
            <person name="Chen S."/>
            <person name="Nie H."/>
            <person name="Peng J."/>
            <person name="Xu J."/>
            <person name="Wang Y."/>
            <person name="Yuan Z."/>
            <person name="Wen Y."/>
            <person name="Yao Z."/>
            <person name="Shen Y."/>
            <person name="Qiang B."/>
            <person name="Hou Y."/>
            <person name="Yu J."/>
            <person name="Jin Q."/>
        </authorList>
    </citation>
    <scope>NUCLEOTIDE SEQUENCE [LARGE SCALE GENOMIC DNA]</scope>
    <source>
        <strain>Sd197</strain>
    </source>
</reference>
<sequence>MKPLHYTASALALGLALMGNAQAVTTIPFWHSMEGELGKEVDSLAQRFNAENPDYKIVPTYKGNYEQNLSAGIAAFRTGNAPAILQVYEVGTATMMASKAIQPVYDVFKEAGIQFDESQFVPTVSGYYSDSKTGHLLSQPFNSSTPVLYYNKDAFKKAGLDPEQPPKTWQDLADYAAKLKASGMKCGYASGWQGRIQLENFSAWNGLPFASKNNGFDGTDAVLEFNKPEQVKHIAMLEEMNKKGDFSYVGRKDESTEKFYNGDCAMTTASSGSLANIREYAKFNYGVGMMPYDADAKDAPQNAIIGGASLWVMQGKDKETYTGVAKFLDFLAKPENAAEWHQKTGYLPITKAAYDLTREQGFYEKNPGADTATRQMLNKPPLPFTKGLRLGNMPQIRVIVDEELESVWTGKKTPQQALDTAVERGNQLLRRFEKSTKS</sequence>
<keyword id="KW-0574">Periplasm</keyword>
<keyword id="KW-1185">Reference proteome</keyword>
<keyword id="KW-0732">Signal</keyword>
<keyword id="KW-0813">Transport</keyword>